<comment type="function">
    <text evidence="1">Endo-1,5-alpha-L-arabinanase involved in degradation of pectin. Its preferred substrate is linear 1,5-alpha-L-arabinan (By similarity).</text>
</comment>
<comment type="catalytic activity">
    <reaction>
        <text>Endohydrolysis of (1-&gt;5)-alpha-arabinofuranosidic linkages in (1-&gt;5)-arabinans.</text>
        <dbReference type="EC" id="3.2.1.99"/>
    </reaction>
</comment>
<comment type="pathway">
    <text>Glycan metabolism; L-arabinan degradation.</text>
</comment>
<comment type="subcellular location">
    <subcellularLocation>
        <location evidence="1">Secreted</location>
    </subcellularLocation>
</comment>
<comment type="similarity">
    <text evidence="4">Belongs to the glycosyl hydrolase 43 family.</text>
</comment>
<keyword id="KW-0119">Carbohydrate metabolism</keyword>
<keyword id="KW-0325">Glycoprotein</keyword>
<keyword id="KW-0326">Glycosidase</keyword>
<keyword id="KW-0378">Hydrolase</keyword>
<keyword id="KW-0624">Polysaccharide degradation</keyword>
<keyword id="KW-1185">Reference proteome</keyword>
<keyword id="KW-0964">Secreted</keyword>
<keyword id="KW-0732">Signal</keyword>
<keyword id="KW-0858">Xylan degradation</keyword>
<protein>
    <recommendedName>
        <fullName>Probable arabinan endo-1,5-alpha-L-arabinosidase A</fullName>
        <ecNumber>3.2.1.99</ecNumber>
    </recommendedName>
    <alternativeName>
        <fullName>Endo-1,5-alpha-L-arabinanase A</fullName>
        <shortName>ABN A</shortName>
    </alternativeName>
</protein>
<name>ABNA_ASPOR</name>
<organism>
    <name type="scientific">Aspergillus oryzae (strain ATCC 42149 / RIB 40)</name>
    <name type="common">Yellow koji mold</name>
    <dbReference type="NCBI Taxonomy" id="510516"/>
    <lineage>
        <taxon>Eukaryota</taxon>
        <taxon>Fungi</taxon>
        <taxon>Dikarya</taxon>
        <taxon>Ascomycota</taxon>
        <taxon>Pezizomycotina</taxon>
        <taxon>Eurotiomycetes</taxon>
        <taxon>Eurotiomycetidae</taxon>
        <taxon>Eurotiales</taxon>
        <taxon>Aspergillaceae</taxon>
        <taxon>Aspergillus</taxon>
        <taxon>Aspergillus subgen. Circumdati</taxon>
    </lineage>
</organism>
<proteinExistence type="inferred from homology"/>
<reference key="1">
    <citation type="journal article" date="2005" name="Nature">
        <title>Genome sequencing and analysis of Aspergillus oryzae.</title>
        <authorList>
            <person name="Machida M."/>
            <person name="Asai K."/>
            <person name="Sano M."/>
            <person name="Tanaka T."/>
            <person name="Kumagai T."/>
            <person name="Terai G."/>
            <person name="Kusumoto K."/>
            <person name="Arima T."/>
            <person name="Akita O."/>
            <person name="Kashiwagi Y."/>
            <person name="Abe K."/>
            <person name="Gomi K."/>
            <person name="Horiuchi H."/>
            <person name="Kitamoto K."/>
            <person name="Kobayashi T."/>
            <person name="Takeuchi M."/>
            <person name="Denning D.W."/>
            <person name="Galagan J.E."/>
            <person name="Nierman W.C."/>
            <person name="Yu J."/>
            <person name="Archer D.B."/>
            <person name="Bennett J.W."/>
            <person name="Bhatnagar D."/>
            <person name="Cleveland T.E."/>
            <person name="Fedorova N.D."/>
            <person name="Gotoh O."/>
            <person name="Horikawa H."/>
            <person name="Hosoyama A."/>
            <person name="Ichinomiya M."/>
            <person name="Igarashi R."/>
            <person name="Iwashita K."/>
            <person name="Juvvadi P.R."/>
            <person name="Kato M."/>
            <person name="Kato Y."/>
            <person name="Kin T."/>
            <person name="Kokubun A."/>
            <person name="Maeda H."/>
            <person name="Maeyama N."/>
            <person name="Maruyama J."/>
            <person name="Nagasaki H."/>
            <person name="Nakajima T."/>
            <person name="Oda K."/>
            <person name="Okada K."/>
            <person name="Paulsen I."/>
            <person name="Sakamoto K."/>
            <person name="Sawano T."/>
            <person name="Takahashi M."/>
            <person name="Takase K."/>
            <person name="Terabayashi Y."/>
            <person name="Wortman J.R."/>
            <person name="Yamada O."/>
            <person name="Yamagata Y."/>
            <person name="Anazawa H."/>
            <person name="Hata Y."/>
            <person name="Koide Y."/>
            <person name="Komori T."/>
            <person name="Koyama Y."/>
            <person name="Minetoki T."/>
            <person name="Suharnan S."/>
            <person name="Tanaka A."/>
            <person name="Isono K."/>
            <person name="Kuhara S."/>
            <person name="Ogasawara N."/>
            <person name="Kikuchi H."/>
        </authorList>
    </citation>
    <scope>NUCLEOTIDE SEQUENCE [LARGE SCALE GENOMIC DNA]</scope>
    <source>
        <strain>ATCC 42149 / RIB 40</strain>
    </source>
</reference>
<accession>Q2U8C6</accession>
<evidence type="ECO:0000250" key="1"/>
<evidence type="ECO:0000250" key="2">
    <source>
        <dbReference type="UniProtKB" id="P94522"/>
    </source>
</evidence>
<evidence type="ECO:0000255" key="3"/>
<evidence type="ECO:0000305" key="4"/>
<feature type="signal peptide" evidence="3">
    <location>
        <begin position="1"/>
        <end position="19"/>
    </location>
</feature>
<feature type="chain" id="PRO_0000394621" description="Probable arabinan endo-1,5-alpha-L-arabinosidase A">
    <location>
        <begin position="20"/>
        <end position="319"/>
    </location>
</feature>
<feature type="active site" description="Proton acceptor" evidence="2">
    <location>
        <position position="34"/>
    </location>
</feature>
<feature type="active site" description="Proton donor" evidence="2">
    <location>
        <position position="198"/>
    </location>
</feature>
<feature type="site" description="Important for catalytic activity, responsible for pKa modulation of the active site Glu and correct orientation of both the proton donor and substrate" evidence="2">
    <location>
        <position position="147"/>
    </location>
</feature>
<feature type="glycosylation site" description="N-linked (GlcNAc...) asparagine" evidence="3">
    <location>
        <position position="53"/>
    </location>
</feature>
<sequence length="319" mass="34094">MYLQSSLALVLLRAAVVHGYANPGACSGACNIHDPSLIQNGDGTYYRFSTGNNISFASASSIEGPWTALGSVLPGGSSIDNSGRYDPWAPDVQKVGDLYYLYYAVSSFGTQESAIGLATSETMEEGTWTDKGSIVTSTTGDQYNAIDANLLVDGSANYLTFGSFWQDIFQVTLNGDATSSTSTPVNVAFDPATTHPVEGAYLYKYGDYYYLFYSWGTCCGYDTSRPAEGEEYKIKVCRSSTPTGNFVDASGVACTDGGGTVVLESHDNVYGPGGQGVYTDPNLGPVLYYHYVDTTIGYADSQKLFGWNAIDFSSGWPSV</sequence>
<dbReference type="EC" id="3.2.1.99"/>
<dbReference type="EMBL" id="BA000053">
    <property type="protein sequence ID" value="BAE62189.1"/>
    <property type="molecule type" value="Genomic_DNA"/>
</dbReference>
<dbReference type="RefSeq" id="XP_001823322.1">
    <property type="nucleotide sequence ID" value="XM_001823270.1"/>
</dbReference>
<dbReference type="SMR" id="Q2U8C6"/>
<dbReference type="STRING" id="510516.Q2U8C6"/>
<dbReference type="CAZy" id="GH43">
    <property type="family name" value="Glycoside Hydrolase Family 43"/>
</dbReference>
<dbReference type="GlyCosmos" id="Q2U8C6">
    <property type="glycosylation" value="1 site, No reported glycans"/>
</dbReference>
<dbReference type="EnsemblFungi" id="BAE62189">
    <property type="protein sequence ID" value="BAE62189"/>
    <property type="gene ID" value="AO090701000481"/>
</dbReference>
<dbReference type="GeneID" id="5995379"/>
<dbReference type="KEGG" id="aor:AO090701000481"/>
<dbReference type="VEuPathDB" id="FungiDB:AO090701000481"/>
<dbReference type="HOGENOM" id="CLU_009397_5_0_1"/>
<dbReference type="OMA" id="MNFGSFY"/>
<dbReference type="OrthoDB" id="864at5052"/>
<dbReference type="UniPathway" id="UPA00667"/>
<dbReference type="Proteomes" id="UP000006564">
    <property type="component" value="Chromosome 5"/>
</dbReference>
<dbReference type="GO" id="GO:0005576">
    <property type="term" value="C:extracellular region"/>
    <property type="evidence" value="ECO:0007669"/>
    <property type="project" value="UniProtKB-SubCell"/>
</dbReference>
<dbReference type="GO" id="GO:0046558">
    <property type="term" value="F:arabinan endo-1,5-alpha-L-arabinosidase activity"/>
    <property type="evidence" value="ECO:0007669"/>
    <property type="project" value="UniProtKB-EC"/>
</dbReference>
<dbReference type="GO" id="GO:0031222">
    <property type="term" value="P:arabinan catabolic process"/>
    <property type="evidence" value="ECO:0007669"/>
    <property type="project" value="UniProtKB-UniPathway"/>
</dbReference>
<dbReference type="GO" id="GO:0045493">
    <property type="term" value="P:xylan catabolic process"/>
    <property type="evidence" value="ECO:0007669"/>
    <property type="project" value="UniProtKB-KW"/>
</dbReference>
<dbReference type="CDD" id="cd18831">
    <property type="entry name" value="GH43_AnAbnA-like"/>
    <property type="match status" value="1"/>
</dbReference>
<dbReference type="FunFam" id="2.115.10.20:FF:000005">
    <property type="entry name" value="Arabinan endo-1,5-alpha-L-arabinosidase"/>
    <property type="match status" value="1"/>
</dbReference>
<dbReference type="Gene3D" id="2.115.10.20">
    <property type="entry name" value="Glycosyl hydrolase domain, family 43"/>
    <property type="match status" value="1"/>
</dbReference>
<dbReference type="InterPro" id="IPR050727">
    <property type="entry name" value="GH43_arabinanases"/>
</dbReference>
<dbReference type="InterPro" id="IPR006710">
    <property type="entry name" value="Glyco_hydro_43"/>
</dbReference>
<dbReference type="InterPro" id="IPR016840">
    <property type="entry name" value="Glyco_hydro_43_endo_a_Ara-ase"/>
</dbReference>
<dbReference type="InterPro" id="IPR023296">
    <property type="entry name" value="Glyco_hydro_beta-prop_sf"/>
</dbReference>
<dbReference type="PANTHER" id="PTHR43301">
    <property type="entry name" value="ARABINAN ENDO-1,5-ALPHA-L-ARABINOSIDASE"/>
    <property type="match status" value="1"/>
</dbReference>
<dbReference type="PANTHER" id="PTHR43301:SF3">
    <property type="entry name" value="ARABINAN ENDO-1,5-ALPHA-L-ARABINOSIDASE A-RELATED"/>
    <property type="match status" value="1"/>
</dbReference>
<dbReference type="Pfam" id="PF04616">
    <property type="entry name" value="Glyco_hydro_43"/>
    <property type="match status" value="1"/>
</dbReference>
<dbReference type="PIRSF" id="PIRSF026534">
    <property type="entry name" value="Endo_alpha-L-arabinosidase"/>
    <property type="match status" value="1"/>
</dbReference>
<dbReference type="SUPFAM" id="SSF75005">
    <property type="entry name" value="Arabinanase/levansucrase/invertase"/>
    <property type="match status" value="1"/>
</dbReference>
<gene>
    <name type="primary">abnA</name>
    <name type="ORF">AO090701000481</name>
</gene>